<reference key="1">
    <citation type="journal article" date="2007" name="PLoS ONE">
        <title>Paradoxical DNA repair and peroxide resistance gene conservation in Bacillus pumilus SAFR-032.</title>
        <authorList>
            <person name="Gioia J."/>
            <person name="Yerrapragada S."/>
            <person name="Qin X."/>
            <person name="Jiang H."/>
            <person name="Igboeli O.C."/>
            <person name="Muzny D."/>
            <person name="Dugan-Rocha S."/>
            <person name="Ding Y."/>
            <person name="Hawes A."/>
            <person name="Liu W."/>
            <person name="Perez L."/>
            <person name="Kovar C."/>
            <person name="Dinh H."/>
            <person name="Lee S."/>
            <person name="Nazareth L."/>
            <person name="Blyth P."/>
            <person name="Holder M."/>
            <person name="Buhay C."/>
            <person name="Tirumalai M.R."/>
            <person name="Liu Y."/>
            <person name="Dasgupta I."/>
            <person name="Bokhetache L."/>
            <person name="Fujita M."/>
            <person name="Karouia F."/>
            <person name="Eswara Moorthy P."/>
            <person name="Siefert J."/>
            <person name="Uzman A."/>
            <person name="Buzumbo P."/>
            <person name="Verma A."/>
            <person name="Zwiya H."/>
            <person name="McWilliams B.D."/>
            <person name="Olowu A."/>
            <person name="Clinkenbeard K.D."/>
            <person name="Newcombe D."/>
            <person name="Golebiewski L."/>
            <person name="Petrosino J.F."/>
            <person name="Nicholson W.L."/>
            <person name="Fox G.E."/>
            <person name="Venkateswaran K."/>
            <person name="Highlander S.K."/>
            <person name="Weinstock G.M."/>
        </authorList>
    </citation>
    <scope>NUCLEOTIDE SEQUENCE [LARGE SCALE GENOMIC DNA]</scope>
    <source>
        <strain>SAFR-032</strain>
    </source>
</reference>
<organism>
    <name type="scientific">Bacillus pumilus (strain SAFR-032)</name>
    <dbReference type="NCBI Taxonomy" id="315750"/>
    <lineage>
        <taxon>Bacteria</taxon>
        <taxon>Bacillati</taxon>
        <taxon>Bacillota</taxon>
        <taxon>Bacilli</taxon>
        <taxon>Bacillales</taxon>
        <taxon>Bacillaceae</taxon>
        <taxon>Bacillus</taxon>
    </lineage>
</organism>
<name>Y828_BACP2</name>
<feature type="chain" id="PRO_0000346310" description="UPF0295 protein BPUM_0828">
    <location>
        <begin position="1"/>
        <end position="115"/>
    </location>
</feature>
<feature type="transmembrane region" description="Helical" evidence="1">
    <location>
        <begin position="13"/>
        <end position="33"/>
    </location>
</feature>
<feature type="transmembrane region" description="Helical" evidence="1">
    <location>
        <begin position="41"/>
        <end position="61"/>
    </location>
</feature>
<keyword id="KW-1003">Cell membrane</keyword>
<keyword id="KW-0472">Membrane</keyword>
<keyword id="KW-0812">Transmembrane</keyword>
<keyword id="KW-1133">Transmembrane helix</keyword>
<proteinExistence type="inferred from homology"/>
<gene>
    <name type="ordered locus">BPUM_0828</name>
</gene>
<sequence>MAKYSSKINKIRTFALSLVFVGFLIMYIGVFFKESIWLSTFFMLLGVLSIGLSTVVYFWIGMLSTKAVRVVCPGCEKETKVLGRVDMCMHCREPLTLDPGLEGKEFDESYNRKKS</sequence>
<comment type="subcellular location">
    <subcellularLocation>
        <location evidence="1">Cell membrane</location>
        <topology evidence="1">Multi-pass membrane protein</topology>
    </subcellularLocation>
</comment>
<comment type="similarity">
    <text evidence="1">Belongs to the UPF0295 family.</text>
</comment>
<accession>A8FB95</accession>
<evidence type="ECO:0000255" key="1">
    <source>
        <dbReference type="HAMAP-Rule" id="MF_01502"/>
    </source>
</evidence>
<protein>
    <recommendedName>
        <fullName evidence="1">UPF0295 protein BPUM_0828</fullName>
    </recommendedName>
</protein>
<dbReference type="EMBL" id="CP000813">
    <property type="protein sequence ID" value="ABV61512.1"/>
    <property type="molecule type" value="Genomic_DNA"/>
</dbReference>
<dbReference type="RefSeq" id="WP_012009348.1">
    <property type="nucleotide sequence ID" value="NZ_VEIS01000018.1"/>
</dbReference>
<dbReference type="STRING" id="315750.BPUM_0828"/>
<dbReference type="GeneID" id="5620073"/>
<dbReference type="KEGG" id="bpu:BPUM_0828"/>
<dbReference type="eggNOG" id="ENOG50313Y4">
    <property type="taxonomic scope" value="Bacteria"/>
</dbReference>
<dbReference type="HOGENOM" id="CLU_143991_0_0_9"/>
<dbReference type="OrthoDB" id="1653848at2"/>
<dbReference type="Proteomes" id="UP000001355">
    <property type="component" value="Chromosome"/>
</dbReference>
<dbReference type="GO" id="GO:0005886">
    <property type="term" value="C:plasma membrane"/>
    <property type="evidence" value="ECO:0007669"/>
    <property type="project" value="UniProtKB-SubCell"/>
</dbReference>
<dbReference type="HAMAP" id="MF_01502">
    <property type="entry name" value="UPF0295"/>
    <property type="match status" value="1"/>
</dbReference>
<dbReference type="InterPro" id="IPR020912">
    <property type="entry name" value="UPF0295"/>
</dbReference>
<dbReference type="NCBIfam" id="NF002796">
    <property type="entry name" value="PRK02935.1"/>
    <property type="match status" value="1"/>
</dbReference>
<dbReference type="Pfam" id="PF11023">
    <property type="entry name" value="DUF2614"/>
    <property type="match status" value="1"/>
</dbReference>